<feature type="chain" id="PRO_0000367956" description="Probable protein phosphatase 2C 27">
    <location>
        <begin position="1"/>
        <end position="380"/>
    </location>
</feature>
<feature type="domain" description="PPM-type phosphatase" evidence="2">
    <location>
        <begin position="84"/>
        <end position="344"/>
    </location>
</feature>
<feature type="binding site" evidence="1">
    <location>
        <position position="128"/>
    </location>
    <ligand>
        <name>Mn(2+)</name>
        <dbReference type="ChEBI" id="CHEBI:29035"/>
        <label>1</label>
    </ligand>
</feature>
<feature type="binding site" evidence="1">
    <location>
        <position position="128"/>
    </location>
    <ligand>
        <name>Mn(2+)</name>
        <dbReference type="ChEBI" id="CHEBI:29035"/>
        <label>2</label>
    </ligand>
</feature>
<feature type="binding site" evidence="1">
    <location>
        <position position="129"/>
    </location>
    <ligand>
        <name>Mn(2+)</name>
        <dbReference type="ChEBI" id="CHEBI:29035"/>
        <label>1</label>
    </ligand>
</feature>
<feature type="binding site" evidence="1">
    <location>
        <position position="292"/>
    </location>
    <ligand>
        <name>Mn(2+)</name>
        <dbReference type="ChEBI" id="CHEBI:29035"/>
        <label>2</label>
    </ligand>
</feature>
<feature type="binding site" evidence="1">
    <location>
        <position position="335"/>
    </location>
    <ligand>
        <name>Mn(2+)</name>
        <dbReference type="ChEBI" id="CHEBI:29035"/>
        <label>2</label>
    </ligand>
</feature>
<gene>
    <name evidence="4" type="primary">PP2C27</name>
    <name evidence="5" type="synonym">PP2CG1</name>
    <name evidence="7" type="ordered locus">At2g33700</name>
    <name evidence="8" type="ORF">T1B8.2</name>
</gene>
<reference key="1">
    <citation type="journal article" date="1999" name="Nature">
        <title>Sequence and analysis of chromosome 2 of the plant Arabidopsis thaliana.</title>
        <authorList>
            <person name="Lin X."/>
            <person name="Kaul S."/>
            <person name="Rounsley S.D."/>
            <person name="Shea T.P."/>
            <person name="Benito M.-I."/>
            <person name="Town C.D."/>
            <person name="Fujii C.Y."/>
            <person name="Mason T.M."/>
            <person name="Bowman C.L."/>
            <person name="Barnstead M.E."/>
            <person name="Feldblyum T.V."/>
            <person name="Buell C.R."/>
            <person name="Ketchum K.A."/>
            <person name="Lee J.J."/>
            <person name="Ronning C.M."/>
            <person name="Koo H.L."/>
            <person name="Moffat K.S."/>
            <person name="Cronin L.A."/>
            <person name="Shen M."/>
            <person name="Pai G."/>
            <person name="Van Aken S."/>
            <person name="Umayam L."/>
            <person name="Tallon L.J."/>
            <person name="Gill J.E."/>
            <person name="Adams M.D."/>
            <person name="Carrera A.J."/>
            <person name="Creasy T.H."/>
            <person name="Goodman H.M."/>
            <person name="Somerville C.R."/>
            <person name="Copenhaver G.P."/>
            <person name="Preuss D."/>
            <person name="Nierman W.C."/>
            <person name="White O."/>
            <person name="Eisen J.A."/>
            <person name="Salzberg S.L."/>
            <person name="Fraser C.M."/>
            <person name="Venter J.C."/>
        </authorList>
    </citation>
    <scope>NUCLEOTIDE SEQUENCE [LARGE SCALE GENOMIC DNA]</scope>
    <source>
        <strain>cv. Columbia</strain>
    </source>
</reference>
<reference key="2">
    <citation type="journal article" date="2017" name="Plant J.">
        <title>Araport11: a complete reannotation of the Arabidopsis thaliana reference genome.</title>
        <authorList>
            <person name="Cheng C.Y."/>
            <person name="Krishnakumar V."/>
            <person name="Chan A.P."/>
            <person name="Thibaud-Nissen F."/>
            <person name="Schobel S."/>
            <person name="Town C.D."/>
        </authorList>
    </citation>
    <scope>GENOME REANNOTATION</scope>
    <source>
        <strain>cv. Columbia</strain>
    </source>
</reference>
<reference key="3">
    <citation type="journal article" date="2003" name="Science">
        <title>Empirical analysis of transcriptional activity in the Arabidopsis genome.</title>
        <authorList>
            <person name="Yamada K."/>
            <person name="Lim J."/>
            <person name="Dale J.M."/>
            <person name="Chen H."/>
            <person name="Shinn P."/>
            <person name="Palm C.J."/>
            <person name="Southwick A.M."/>
            <person name="Wu H.C."/>
            <person name="Kim C.J."/>
            <person name="Nguyen M."/>
            <person name="Pham P.K."/>
            <person name="Cheuk R.F."/>
            <person name="Karlin-Newmann G."/>
            <person name="Liu S.X."/>
            <person name="Lam B."/>
            <person name="Sakano H."/>
            <person name="Wu T."/>
            <person name="Yu G."/>
            <person name="Miranda M."/>
            <person name="Quach H.L."/>
            <person name="Tripp M."/>
            <person name="Chang C.H."/>
            <person name="Lee J.M."/>
            <person name="Toriumi M.J."/>
            <person name="Chan M.M."/>
            <person name="Tang C.C."/>
            <person name="Onodera C.S."/>
            <person name="Deng J.M."/>
            <person name="Akiyama K."/>
            <person name="Ansari Y."/>
            <person name="Arakawa T."/>
            <person name="Banh J."/>
            <person name="Banno F."/>
            <person name="Bowser L."/>
            <person name="Brooks S.Y."/>
            <person name="Carninci P."/>
            <person name="Chao Q."/>
            <person name="Choy N."/>
            <person name="Enju A."/>
            <person name="Goldsmith A.D."/>
            <person name="Gurjal M."/>
            <person name="Hansen N.F."/>
            <person name="Hayashizaki Y."/>
            <person name="Johnson-Hopson C."/>
            <person name="Hsuan V.W."/>
            <person name="Iida K."/>
            <person name="Karnes M."/>
            <person name="Khan S."/>
            <person name="Koesema E."/>
            <person name="Ishida J."/>
            <person name="Jiang P.X."/>
            <person name="Jones T."/>
            <person name="Kawai J."/>
            <person name="Kamiya A."/>
            <person name="Meyers C."/>
            <person name="Nakajima M."/>
            <person name="Narusaka M."/>
            <person name="Seki M."/>
            <person name="Sakurai T."/>
            <person name="Satou M."/>
            <person name="Tamse R."/>
            <person name="Vaysberg M."/>
            <person name="Wallender E.K."/>
            <person name="Wong C."/>
            <person name="Yamamura Y."/>
            <person name="Yuan S."/>
            <person name="Shinozaki K."/>
            <person name="Davis R.W."/>
            <person name="Theologis A."/>
            <person name="Ecker J.R."/>
        </authorList>
    </citation>
    <scope>NUCLEOTIDE SEQUENCE [LARGE SCALE MRNA]</scope>
    <source>
        <strain>cv. Columbia</strain>
    </source>
</reference>
<reference key="4">
    <citation type="journal article" date="2008" name="BMC Genomics">
        <title>Genome-wide and expression analysis of protein phosphatase 2C in rice and Arabidopsis.</title>
        <authorList>
            <person name="Xue T."/>
            <person name="Wang D."/>
            <person name="Zhang S."/>
            <person name="Ehlting J."/>
            <person name="Ni F."/>
            <person name="Jacab S."/>
            <person name="Zheng C."/>
            <person name="Zhong Y."/>
        </authorList>
    </citation>
    <scope>GENE FAMILY</scope>
    <scope>NOMENCLATURE</scope>
    <source>
        <strain>cv. Columbia</strain>
    </source>
</reference>
<reference key="5">
    <citation type="journal article" date="2012" name="Biochem. Biophys. Res. Commun.">
        <title>AtPP2CG1, a protein phosphatase 2C, positively regulates salt tolerance of Arabidopsis in abscisic acid-dependent manner.</title>
        <authorList>
            <person name="Liu X."/>
            <person name="Zhu Y."/>
            <person name="Zhai H."/>
            <person name="Cai H."/>
            <person name="Ji W."/>
            <person name="Luo X."/>
            <person name="Li J."/>
            <person name="Bai X."/>
        </authorList>
    </citation>
    <scope>FUNCTION</scope>
    <scope>DISRUPTION PHENOTYPE</scope>
    <scope>INDUCTION BY SALT STRESS; DROUGHT AND ABSCISIC ACID</scope>
    <scope>SUBCELLULAR LOCATION</scope>
    <scope>TISSUE SPECIFICITY</scope>
    <source>
        <strain>cv. Columbia</strain>
    </source>
</reference>
<name>P2C27_ARATH</name>
<proteinExistence type="evidence at transcript level"/>
<dbReference type="EC" id="3.1.3.16" evidence="2"/>
<dbReference type="EMBL" id="U78721">
    <property type="protein sequence ID" value="AAC69126.1"/>
    <property type="molecule type" value="Genomic_DNA"/>
</dbReference>
<dbReference type="EMBL" id="CP002685">
    <property type="protein sequence ID" value="AEC08870.1"/>
    <property type="molecule type" value="Genomic_DNA"/>
</dbReference>
<dbReference type="EMBL" id="AY070460">
    <property type="protein sequence ID" value="AAL49863.1"/>
    <property type="molecule type" value="mRNA"/>
</dbReference>
<dbReference type="EMBL" id="AY091323">
    <property type="protein sequence ID" value="AAM14262.1"/>
    <property type="molecule type" value="mRNA"/>
</dbReference>
<dbReference type="PIR" id="E84748">
    <property type="entry name" value="E84748"/>
</dbReference>
<dbReference type="RefSeq" id="NP_180926.1">
    <property type="nucleotide sequence ID" value="NM_128928.3"/>
</dbReference>
<dbReference type="SMR" id="P93006"/>
<dbReference type="BioGRID" id="3282">
    <property type="interactions" value="1"/>
</dbReference>
<dbReference type="FunCoup" id="P93006">
    <property type="interactions" value="170"/>
</dbReference>
<dbReference type="IntAct" id="P93006">
    <property type="interactions" value="1"/>
</dbReference>
<dbReference type="STRING" id="3702.P93006"/>
<dbReference type="iPTMnet" id="P93006"/>
<dbReference type="PaxDb" id="3702-AT2G33700.1"/>
<dbReference type="ProteomicsDB" id="248709"/>
<dbReference type="EnsemblPlants" id="AT2G33700.1">
    <property type="protein sequence ID" value="AT2G33700.1"/>
    <property type="gene ID" value="AT2G33700"/>
</dbReference>
<dbReference type="GeneID" id="817935"/>
<dbReference type="Gramene" id="AT2G33700.1">
    <property type="protein sequence ID" value="AT2G33700.1"/>
    <property type="gene ID" value="AT2G33700"/>
</dbReference>
<dbReference type="KEGG" id="ath:AT2G33700"/>
<dbReference type="Araport" id="AT2G33700"/>
<dbReference type="TAIR" id="AT2G33700">
    <property type="gene designation" value="PP2CG1"/>
</dbReference>
<dbReference type="eggNOG" id="KOG0698">
    <property type="taxonomic scope" value="Eukaryota"/>
</dbReference>
<dbReference type="HOGENOM" id="CLU_013173_21_2_1"/>
<dbReference type="InParanoid" id="P93006"/>
<dbReference type="OMA" id="SMQRITT"/>
<dbReference type="OrthoDB" id="10264738at2759"/>
<dbReference type="PhylomeDB" id="P93006"/>
<dbReference type="PRO" id="PR:P93006"/>
<dbReference type="Proteomes" id="UP000006548">
    <property type="component" value="Chromosome 2"/>
</dbReference>
<dbReference type="ExpressionAtlas" id="P93006">
    <property type="expression patterns" value="baseline and differential"/>
</dbReference>
<dbReference type="GO" id="GO:0005737">
    <property type="term" value="C:cytoplasm"/>
    <property type="evidence" value="ECO:0000314"/>
    <property type="project" value="TAIR"/>
</dbReference>
<dbReference type="GO" id="GO:0005634">
    <property type="term" value="C:nucleus"/>
    <property type="evidence" value="ECO:0000314"/>
    <property type="project" value="TAIR"/>
</dbReference>
<dbReference type="GO" id="GO:0046872">
    <property type="term" value="F:metal ion binding"/>
    <property type="evidence" value="ECO:0007669"/>
    <property type="project" value="UniProtKB-KW"/>
</dbReference>
<dbReference type="GO" id="GO:0004722">
    <property type="term" value="F:protein serine/threonine phosphatase activity"/>
    <property type="evidence" value="ECO:0007669"/>
    <property type="project" value="UniProtKB-EC"/>
</dbReference>
<dbReference type="GO" id="GO:0009737">
    <property type="term" value="P:response to abscisic acid"/>
    <property type="evidence" value="ECO:0000270"/>
    <property type="project" value="TAIR"/>
</dbReference>
<dbReference type="GO" id="GO:0009651">
    <property type="term" value="P:response to salt stress"/>
    <property type="evidence" value="ECO:0000315"/>
    <property type="project" value="TAIR"/>
</dbReference>
<dbReference type="GO" id="GO:0009414">
    <property type="term" value="P:response to water deprivation"/>
    <property type="evidence" value="ECO:0000270"/>
    <property type="project" value="TAIR"/>
</dbReference>
<dbReference type="CDD" id="cd00143">
    <property type="entry name" value="PP2Cc"/>
    <property type="match status" value="1"/>
</dbReference>
<dbReference type="FunFam" id="3.60.40.10:FF:000004">
    <property type="entry name" value="Probable protein phosphatase 2C 22"/>
    <property type="match status" value="1"/>
</dbReference>
<dbReference type="Gene3D" id="3.60.40.10">
    <property type="entry name" value="PPM-type phosphatase domain"/>
    <property type="match status" value="1"/>
</dbReference>
<dbReference type="InterPro" id="IPR015655">
    <property type="entry name" value="PP2C"/>
</dbReference>
<dbReference type="InterPro" id="IPR000222">
    <property type="entry name" value="PP2C_BS"/>
</dbReference>
<dbReference type="InterPro" id="IPR036457">
    <property type="entry name" value="PPM-type-like_dom_sf"/>
</dbReference>
<dbReference type="InterPro" id="IPR001932">
    <property type="entry name" value="PPM-type_phosphatase-like_dom"/>
</dbReference>
<dbReference type="PANTHER" id="PTHR13832">
    <property type="entry name" value="PROTEIN PHOSPHATASE 2C"/>
    <property type="match status" value="1"/>
</dbReference>
<dbReference type="PANTHER" id="PTHR13832:SF673">
    <property type="entry name" value="PROTEIN PHOSPHATASE 2C 27-RELATED"/>
    <property type="match status" value="1"/>
</dbReference>
<dbReference type="Pfam" id="PF00481">
    <property type="entry name" value="PP2C"/>
    <property type="match status" value="1"/>
</dbReference>
<dbReference type="SMART" id="SM00331">
    <property type="entry name" value="PP2C_SIG"/>
    <property type="match status" value="1"/>
</dbReference>
<dbReference type="SMART" id="SM00332">
    <property type="entry name" value="PP2Cc"/>
    <property type="match status" value="1"/>
</dbReference>
<dbReference type="SUPFAM" id="SSF81606">
    <property type="entry name" value="PP2C-like"/>
    <property type="match status" value="1"/>
</dbReference>
<dbReference type="PROSITE" id="PS01032">
    <property type="entry name" value="PPM_1"/>
    <property type="match status" value="1"/>
</dbReference>
<dbReference type="PROSITE" id="PS51746">
    <property type="entry name" value="PPM_2"/>
    <property type="match status" value="1"/>
</dbReference>
<organism>
    <name type="scientific">Arabidopsis thaliana</name>
    <name type="common">Mouse-ear cress</name>
    <dbReference type="NCBI Taxonomy" id="3702"/>
    <lineage>
        <taxon>Eukaryota</taxon>
        <taxon>Viridiplantae</taxon>
        <taxon>Streptophyta</taxon>
        <taxon>Embryophyta</taxon>
        <taxon>Tracheophyta</taxon>
        <taxon>Spermatophyta</taxon>
        <taxon>Magnoliopsida</taxon>
        <taxon>eudicotyledons</taxon>
        <taxon>Gunneridae</taxon>
        <taxon>Pentapetalae</taxon>
        <taxon>rosids</taxon>
        <taxon>malvids</taxon>
        <taxon>Brassicales</taxon>
        <taxon>Brassicaceae</taxon>
        <taxon>Camelineae</taxon>
        <taxon>Arabidopsis</taxon>
    </lineage>
</organism>
<sequence length="380" mass="41757">MSMDFSPLLTVLEGDFNKDNTSSATEIDTLENLDDTRQISKGKPPRHLTSSATRLQLAANADVDVCNLVMKSLDDKSEFLPVYRSGSCAEQGAKQFMEDEHICIDDLVNHLGAAIQCSSLGAFYGVFDGHGGTDAAHFVRKNILRFIVEDSSFPLCVKKAIKSAFLKADYEFADDSSLDISSGTTALTAFIFGRRLIIANAGDCRAVLGRRGRAIELSKDHKPNCTAEKVRIEKLGGVVYDGYLNGQLSVARAIGDWHMKGPKGSACPLSPEPELQETDLSEDDEFLIMGCDGLWDVMSSQCAVTIARKELMIHNDPERCSRELVREALKRNTCDNLTVIVVCFSPDPPQRIEIRMQSRVRRSISAEGLNLLKGVLDGYP</sequence>
<keyword id="KW-0963">Cytoplasm</keyword>
<keyword id="KW-0378">Hydrolase</keyword>
<keyword id="KW-0460">Magnesium</keyword>
<keyword id="KW-0464">Manganese</keyword>
<keyword id="KW-0479">Metal-binding</keyword>
<keyword id="KW-0539">Nucleus</keyword>
<keyword id="KW-0904">Protein phosphatase</keyword>
<keyword id="KW-1185">Reference proteome</keyword>
<accession>P93006</accession>
<evidence type="ECO:0000250" key="1"/>
<evidence type="ECO:0000255" key="2">
    <source>
        <dbReference type="PROSITE-ProRule" id="PRU01082"/>
    </source>
</evidence>
<evidence type="ECO:0000269" key="3">
    <source>
    </source>
</evidence>
<evidence type="ECO:0000303" key="4">
    <source>
    </source>
</evidence>
<evidence type="ECO:0000303" key="5">
    <source>
    </source>
</evidence>
<evidence type="ECO:0000305" key="6"/>
<evidence type="ECO:0000312" key="7">
    <source>
        <dbReference type="Araport" id="AT2G33700"/>
    </source>
</evidence>
<evidence type="ECO:0000312" key="8">
    <source>
        <dbReference type="EMBL" id="AAC69126.1"/>
    </source>
</evidence>
<protein>
    <recommendedName>
        <fullName evidence="4">Probable protein phosphatase 2C 27</fullName>
        <shortName evidence="4">AtPP2C27</shortName>
        <ecNumber evidence="2">3.1.3.16</ecNumber>
    </recommendedName>
    <alternativeName>
        <fullName evidence="5">Probable protein phosphatase 2C G group 1</fullName>
        <shortName evidence="5">AtPP2CG1</shortName>
    </alternativeName>
</protein>
<comment type="function">
    <text evidence="3">Confers salt tolerance by triggering the expression of stress-responsive genes.</text>
</comment>
<comment type="catalytic activity">
    <reaction evidence="2">
        <text>O-phospho-L-seryl-[protein] + H2O = L-seryl-[protein] + phosphate</text>
        <dbReference type="Rhea" id="RHEA:20629"/>
        <dbReference type="Rhea" id="RHEA-COMP:9863"/>
        <dbReference type="Rhea" id="RHEA-COMP:11604"/>
        <dbReference type="ChEBI" id="CHEBI:15377"/>
        <dbReference type="ChEBI" id="CHEBI:29999"/>
        <dbReference type="ChEBI" id="CHEBI:43474"/>
        <dbReference type="ChEBI" id="CHEBI:83421"/>
        <dbReference type="EC" id="3.1.3.16"/>
    </reaction>
</comment>
<comment type="catalytic activity">
    <reaction evidence="2">
        <text>O-phospho-L-threonyl-[protein] + H2O = L-threonyl-[protein] + phosphate</text>
        <dbReference type="Rhea" id="RHEA:47004"/>
        <dbReference type="Rhea" id="RHEA-COMP:11060"/>
        <dbReference type="Rhea" id="RHEA-COMP:11605"/>
        <dbReference type="ChEBI" id="CHEBI:15377"/>
        <dbReference type="ChEBI" id="CHEBI:30013"/>
        <dbReference type="ChEBI" id="CHEBI:43474"/>
        <dbReference type="ChEBI" id="CHEBI:61977"/>
        <dbReference type="EC" id="3.1.3.16"/>
    </reaction>
</comment>
<comment type="cofactor">
    <cofactor evidence="2">
        <name>Mg(2+)</name>
        <dbReference type="ChEBI" id="CHEBI:18420"/>
    </cofactor>
    <cofactor evidence="2">
        <name>Mn(2+)</name>
        <dbReference type="ChEBI" id="CHEBI:29035"/>
    </cofactor>
    <text evidence="2">Binds 2 magnesium or manganese ions per subunit.</text>
</comment>
<comment type="subcellular location">
    <subcellularLocation>
        <location evidence="3">Nucleus</location>
    </subcellularLocation>
    <subcellularLocation>
        <location evidence="3">Cytoplasm</location>
    </subcellularLocation>
</comment>
<comment type="tissue specificity">
    <text evidence="3">Expressed in roots, leaves, stems, flower, and trichomes.</text>
</comment>
<comment type="induction">
    <text evidence="3">Induced in shoots by drought in roots by abscisic acid (ABA), and both in roots and shoot by salt stress.</text>
</comment>
<comment type="disruption phenotype">
    <text evidence="3">Decreased salt tolerance.</text>
</comment>
<comment type="similarity">
    <text evidence="6">Belongs to the PP2C family.</text>
</comment>